<evidence type="ECO:0000255" key="1">
    <source>
        <dbReference type="HAMAP-Rule" id="MF_00203"/>
    </source>
</evidence>
<name>UVRC_RICRS</name>
<protein>
    <recommendedName>
        <fullName evidence="1">UvrABC system protein C</fullName>
        <shortName evidence="1">Protein UvrC</shortName>
    </recommendedName>
    <alternativeName>
        <fullName evidence="1">Excinuclease ABC subunit C</fullName>
    </alternativeName>
</protein>
<feature type="chain" id="PRO_1000077828" description="UvrABC system protein C">
    <location>
        <begin position="1"/>
        <end position="639"/>
    </location>
</feature>
<feature type="domain" description="GIY-YIG" evidence="1">
    <location>
        <begin position="20"/>
        <end position="97"/>
    </location>
</feature>
<feature type="domain" description="UVR" evidence="1">
    <location>
        <begin position="207"/>
        <end position="242"/>
    </location>
</feature>
<dbReference type="EMBL" id="CP000848">
    <property type="protein sequence ID" value="ABV76456.1"/>
    <property type="molecule type" value="Genomic_DNA"/>
</dbReference>
<dbReference type="RefSeq" id="WP_012151028.1">
    <property type="nucleotide sequence ID" value="NZ_CP121767.1"/>
</dbReference>
<dbReference type="SMR" id="A8GST1"/>
<dbReference type="GeneID" id="79937554"/>
<dbReference type="KEGG" id="rri:A1G_04780"/>
<dbReference type="HOGENOM" id="CLU_014841_3_2_5"/>
<dbReference type="Proteomes" id="UP000006832">
    <property type="component" value="Chromosome"/>
</dbReference>
<dbReference type="GO" id="GO:0005737">
    <property type="term" value="C:cytoplasm"/>
    <property type="evidence" value="ECO:0007669"/>
    <property type="project" value="UniProtKB-SubCell"/>
</dbReference>
<dbReference type="GO" id="GO:0009380">
    <property type="term" value="C:excinuclease repair complex"/>
    <property type="evidence" value="ECO:0007669"/>
    <property type="project" value="InterPro"/>
</dbReference>
<dbReference type="GO" id="GO:0003677">
    <property type="term" value="F:DNA binding"/>
    <property type="evidence" value="ECO:0007669"/>
    <property type="project" value="UniProtKB-UniRule"/>
</dbReference>
<dbReference type="GO" id="GO:0009381">
    <property type="term" value="F:excinuclease ABC activity"/>
    <property type="evidence" value="ECO:0007669"/>
    <property type="project" value="UniProtKB-UniRule"/>
</dbReference>
<dbReference type="GO" id="GO:0006289">
    <property type="term" value="P:nucleotide-excision repair"/>
    <property type="evidence" value="ECO:0007669"/>
    <property type="project" value="UniProtKB-UniRule"/>
</dbReference>
<dbReference type="GO" id="GO:0009432">
    <property type="term" value="P:SOS response"/>
    <property type="evidence" value="ECO:0007669"/>
    <property type="project" value="UniProtKB-UniRule"/>
</dbReference>
<dbReference type="CDD" id="cd10434">
    <property type="entry name" value="GIY-YIG_UvrC_Cho"/>
    <property type="match status" value="1"/>
</dbReference>
<dbReference type="FunFam" id="3.40.1440.10:FF:000001">
    <property type="entry name" value="UvrABC system protein C"/>
    <property type="match status" value="1"/>
</dbReference>
<dbReference type="Gene3D" id="1.10.150.20">
    <property type="entry name" value="5' to 3' exonuclease, C-terminal subdomain"/>
    <property type="match status" value="1"/>
</dbReference>
<dbReference type="Gene3D" id="3.40.1440.10">
    <property type="entry name" value="GIY-YIG endonuclease"/>
    <property type="match status" value="1"/>
</dbReference>
<dbReference type="Gene3D" id="4.10.860.10">
    <property type="entry name" value="UVR domain"/>
    <property type="match status" value="1"/>
</dbReference>
<dbReference type="Gene3D" id="3.30.420.340">
    <property type="entry name" value="UvrC, RNAse H endonuclease domain"/>
    <property type="match status" value="1"/>
</dbReference>
<dbReference type="HAMAP" id="MF_00203">
    <property type="entry name" value="UvrC"/>
    <property type="match status" value="1"/>
</dbReference>
<dbReference type="InterPro" id="IPR000305">
    <property type="entry name" value="GIY-YIG_endonuc"/>
</dbReference>
<dbReference type="InterPro" id="IPR035901">
    <property type="entry name" value="GIY-YIG_endonuc_sf"/>
</dbReference>
<dbReference type="InterPro" id="IPR047296">
    <property type="entry name" value="GIY-YIG_UvrC_Cho"/>
</dbReference>
<dbReference type="InterPro" id="IPR010994">
    <property type="entry name" value="RuvA_2-like"/>
</dbReference>
<dbReference type="InterPro" id="IPR001943">
    <property type="entry name" value="UVR_dom"/>
</dbReference>
<dbReference type="InterPro" id="IPR036876">
    <property type="entry name" value="UVR_dom_sf"/>
</dbReference>
<dbReference type="InterPro" id="IPR050066">
    <property type="entry name" value="UvrABC_protein_C"/>
</dbReference>
<dbReference type="InterPro" id="IPR004791">
    <property type="entry name" value="UvrC"/>
</dbReference>
<dbReference type="InterPro" id="IPR001162">
    <property type="entry name" value="UvrC_RNase_H_dom"/>
</dbReference>
<dbReference type="InterPro" id="IPR038476">
    <property type="entry name" value="UvrC_RNase_H_dom_sf"/>
</dbReference>
<dbReference type="NCBIfam" id="TIGR00194">
    <property type="entry name" value="uvrC"/>
    <property type="match status" value="1"/>
</dbReference>
<dbReference type="PANTHER" id="PTHR30562:SF1">
    <property type="entry name" value="UVRABC SYSTEM PROTEIN C"/>
    <property type="match status" value="1"/>
</dbReference>
<dbReference type="PANTHER" id="PTHR30562">
    <property type="entry name" value="UVRC/OXIDOREDUCTASE"/>
    <property type="match status" value="1"/>
</dbReference>
<dbReference type="Pfam" id="PF01541">
    <property type="entry name" value="GIY-YIG"/>
    <property type="match status" value="1"/>
</dbReference>
<dbReference type="Pfam" id="PF14520">
    <property type="entry name" value="HHH_5"/>
    <property type="match status" value="1"/>
</dbReference>
<dbReference type="Pfam" id="PF02151">
    <property type="entry name" value="UVR"/>
    <property type="match status" value="1"/>
</dbReference>
<dbReference type="Pfam" id="PF22920">
    <property type="entry name" value="UvrC_RNaseH"/>
    <property type="match status" value="1"/>
</dbReference>
<dbReference type="Pfam" id="PF08459">
    <property type="entry name" value="UvrC_RNaseH_dom"/>
    <property type="match status" value="2"/>
</dbReference>
<dbReference type="SMART" id="SM00465">
    <property type="entry name" value="GIYc"/>
    <property type="match status" value="1"/>
</dbReference>
<dbReference type="SUPFAM" id="SSF46600">
    <property type="entry name" value="C-terminal UvrC-binding domain of UvrB"/>
    <property type="match status" value="1"/>
</dbReference>
<dbReference type="SUPFAM" id="SSF82771">
    <property type="entry name" value="GIY-YIG endonuclease"/>
    <property type="match status" value="1"/>
</dbReference>
<dbReference type="SUPFAM" id="SSF47781">
    <property type="entry name" value="RuvA domain 2-like"/>
    <property type="match status" value="1"/>
</dbReference>
<dbReference type="PROSITE" id="PS50164">
    <property type="entry name" value="GIY_YIG"/>
    <property type="match status" value="1"/>
</dbReference>
<dbReference type="PROSITE" id="PS50151">
    <property type="entry name" value="UVR"/>
    <property type="match status" value="1"/>
</dbReference>
<dbReference type="PROSITE" id="PS50165">
    <property type="entry name" value="UVRC"/>
    <property type="match status" value="1"/>
</dbReference>
<keyword id="KW-0963">Cytoplasm</keyword>
<keyword id="KW-0227">DNA damage</keyword>
<keyword id="KW-0228">DNA excision</keyword>
<keyword id="KW-0234">DNA repair</keyword>
<keyword id="KW-0267">Excision nuclease</keyword>
<keyword id="KW-0742">SOS response</keyword>
<reference key="1">
    <citation type="submission" date="2007-09" db="EMBL/GenBank/DDBJ databases">
        <title>Complete genome sequence of Rickettsia rickettsii.</title>
        <authorList>
            <person name="Madan A."/>
            <person name="Fahey J."/>
            <person name="Helton E."/>
            <person name="Ketteman M."/>
            <person name="Madan A."/>
            <person name="Rodrigues S."/>
            <person name="Sanchez A."/>
            <person name="Dasch G."/>
            <person name="Eremeeva M."/>
        </authorList>
    </citation>
    <scope>NUCLEOTIDE SEQUENCE [LARGE SCALE GENOMIC DNA]</scope>
    <source>
        <strain>Sheila Smith</strain>
    </source>
</reference>
<comment type="function">
    <text evidence="1">The UvrABC repair system catalyzes the recognition and processing of DNA lesions. UvrC both incises the 5' and 3' sides of the lesion. The N-terminal half is responsible for the 3' incision and the C-terminal half is responsible for the 5' incision.</text>
</comment>
<comment type="subunit">
    <text evidence="1">Interacts with UvrB in an incision complex.</text>
</comment>
<comment type="subcellular location">
    <subcellularLocation>
        <location evidence="1">Cytoplasm</location>
    </subcellularLocation>
</comment>
<comment type="similarity">
    <text evidence="1">Belongs to the UvrC family.</text>
</comment>
<proteinExistence type="inferred from homology"/>
<organism>
    <name type="scientific">Rickettsia rickettsii (strain Sheila Smith)</name>
    <dbReference type="NCBI Taxonomy" id="392021"/>
    <lineage>
        <taxon>Bacteria</taxon>
        <taxon>Pseudomonadati</taxon>
        <taxon>Pseudomonadota</taxon>
        <taxon>Alphaproteobacteria</taxon>
        <taxon>Rickettsiales</taxon>
        <taxon>Rickettsiaceae</taxon>
        <taxon>Rickettsieae</taxon>
        <taxon>Rickettsia</taxon>
        <taxon>spotted fever group</taxon>
    </lineage>
</organism>
<gene>
    <name evidence="1" type="primary">uvrC</name>
    <name type="ordered locus">A1G_04780</name>
</gene>
<accession>A8GST1</accession>
<sequence>MTLEITGSELIKSKLIDAPERSGVYRMFDVNKQVLYVGKAKNLKKRLTNYIKSNLDNKTLRMIANTCFLEYSITNSEVEALLLEAQLIKKFQPKFNILLKDCKSFPFIKLRLEHDFPQLLKYRGKTLSDGKFFGPFASSVDVNTTLTELQKIFKLRSCTDNYFNSRTRPCLQYEIKRCYAPCVGKINKEDYRDLVTQVKDFLQGRTKELQENLSRKMEELSSQMRFEEAAEIRDRIKALSYVQLKAGVSDVVKDADIIAIVEKNGHYCVEVFLYRAGQACGNIPYFPTSTENSTKEEVLEYFLLQFYQKQHVPAAIIINHEINDKENVIEAIKKINNILQLNITVPNKGGKAKLVQNAEINALFSLEQYLKKFAKNQEIIFEIKELFGLSAIPERIEIYDNSHIQGKFAVGVMVVAGKVGFDKKEYRVFNVYAPSLVCHSRESGDPKRLMDSCFRGNGIKNCWGDIKGDDYEMLRQVLTRRLTRLRQEPHKLPSLMIIDGGKGHLGVVKEVMDKFEMNIPFVCMSKGVDRNAGFEQFHVIGKEVFTLDKNLPVMKYLQILRDEAHNFAIKNHRLGRSRAIKISRLDDIEGVGETRKKALLHYFGSYKAVCDATIYELAKVNGINKLLAEMIFNVLHRKN</sequence>